<accession>Q92PH0</accession>
<dbReference type="EC" id="3.5.1.2" evidence="1"/>
<dbReference type="EMBL" id="AL591688">
    <property type="protein sequence ID" value="CAC46365.1"/>
    <property type="molecule type" value="Genomic_DNA"/>
</dbReference>
<dbReference type="RefSeq" id="NP_385892.1">
    <property type="nucleotide sequence ID" value="NC_003047.1"/>
</dbReference>
<dbReference type="RefSeq" id="WP_010969466.1">
    <property type="nucleotide sequence ID" value="NC_003047.1"/>
</dbReference>
<dbReference type="SMR" id="Q92PH0"/>
<dbReference type="EnsemblBacteria" id="CAC46365">
    <property type="protein sequence ID" value="CAC46365"/>
    <property type="gene ID" value="SMc00486"/>
</dbReference>
<dbReference type="KEGG" id="sme:SMc00486"/>
<dbReference type="PATRIC" id="fig|266834.11.peg.3227"/>
<dbReference type="eggNOG" id="COG2066">
    <property type="taxonomic scope" value="Bacteria"/>
</dbReference>
<dbReference type="HOGENOM" id="CLU_027932_1_1_5"/>
<dbReference type="OrthoDB" id="9788822at2"/>
<dbReference type="Proteomes" id="UP000001976">
    <property type="component" value="Chromosome"/>
</dbReference>
<dbReference type="GO" id="GO:0004359">
    <property type="term" value="F:glutaminase activity"/>
    <property type="evidence" value="ECO:0007669"/>
    <property type="project" value="UniProtKB-UniRule"/>
</dbReference>
<dbReference type="GO" id="GO:0006537">
    <property type="term" value="P:glutamate biosynthetic process"/>
    <property type="evidence" value="ECO:0007669"/>
    <property type="project" value="TreeGrafter"/>
</dbReference>
<dbReference type="GO" id="GO:0006543">
    <property type="term" value="P:glutamine catabolic process"/>
    <property type="evidence" value="ECO:0007669"/>
    <property type="project" value="TreeGrafter"/>
</dbReference>
<dbReference type="FunFam" id="3.40.710.10:FF:000005">
    <property type="entry name" value="Glutaminase"/>
    <property type="match status" value="1"/>
</dbReference>
<dbReference type="Gene3D" id="3.40.710.10">
    <property type="entry name" value="DD-peptidase/beta-lactamase superfamily"/>
    <property type="match status" value="1"/>
</dbReference>
<dbReference type="HAMAP" id="MF_00313">
    <property type="entry name" value="Glutaminase"/>
    <property type="match status" value="1"/>
</dbReference>
<dbReference type="InterPro" id="IPR012338">
    <property type="entry name" value="Beta-lactam/transpept-like"/>
</dbReference>
<dbReference type="InterPro" id="IPR015868">
    <property type="entry name" value="Glutaminase"/>
</dbReference>
<dbReference type="NCBIfam" id="TIGR03814">
    <property type="entry name" value="Gln_ase"/>
    <property type="match status" value="1"/>
</dbReference>
<dbReference type="NCBIfam" id="NF002132">
    <property type="entry name" value="PRK00971.1-1"/>
    <property type="match status" value="1"/>
</dbReference>
<dbReference type="NCBIfam" id="NF002133">
    <property type="entry name" value="PRK00971.1-2"/>
    <property type="match status" value="1"/>
</dbReference>
<dbReference type="PANTHER" id="PTHR12544">
    <property type="entry name" value="GLUTAMINASE"/>
    <property type="match status" value="1"/>
</dbReference>
<dbReference type="PANTHER" id="PTHR12544:SF29">
    <property type="entry name" value="GLUTAMINASE"/>
    <property type="match status" value="1"/>
</dbReference>
<dbReference type="Pfam" id="PF04960">
    <property type="entry name" value="Glutaminase"/>
    <property type="match status" value="1"/>
</dbReference>
<dbReference type="SUPFAM" id="SSF56601">
    <property type="entry name" value="beta-lactamase/transpeptidase-like"/>
    <property type="match status" value="1"/>
</dbReference>
<evidence type="ECO:0000255" key="1">
    <source>
        <dbReference type="HAMAP-Rule" id="MF_00313"/>
    </source>
</evidence>
<reference key="1">
    <citation type="journal article" date="2001" name="Proc. Natl. Acad. Sci. U.S.A.">
        <title>Analysis of the chromosome sequence of the legume symbiont Sinorhizobium meliloti strain 1021.</title>
        <authorList>
            <person name="Capela D."/>
            <person name="Barloy-Hubler F."/>
            <person name="Gouzy J."/>
            <person name="Bothe G."/>
            <person name="Ampe F."/>
            <person name="Batut J."/>
            <person name="Boistard P."/>
            <person name="Becker A."/>
            <person name="Boutry M."/>
            <person name="Cadieu E."/>
            <person name="Dreano S."/>
            <person name="Gloux S."/>
            <person name="Godrie T."/>
            <person name="Goffeau A."/>
            <person name="Kahn D."/>
            <person name="Kiss E."/>
            <person name="Lelaure V."/>
            <person name="Masuy D."/>
            <person name="Pohl T."/>
            <person name="Portetelle D."/>
            <person name="Puehler A."/>
            <person name="Purnelle B."/>
            <person name="Ramsperger U."/>
            <person name="Renard C."/>
            <person name="Thebault P."/>
            <person name="Vandenbol M."/>
            <person name="Weidner S."/>
            <person name="Galibert F."/>
        </authorList>
    </citation>
    <scope>NUCLEOTIDE SEQUENCE [LARGE SCALE GENOMIC DNA]</scope>
    <source>
        <strain>1021</strain>
    </source>
</reference>
<reference key="2">
    <citation type="journal article" date="2001" name="Science">
        <title>The composite genome of the legume symbiont Sinorhizobium meliloti.</title>
        <authorList>
            <person name="Galibert F."/>
            <person name="Finan T.M."/>
            <person name="Long S.R."/>
            <person name="Puehler A."/>
            <person name="Abola P."/>
            <person name="Ampe F."/>
            <person name="Barloy-Hubler F."/>
            <person name="Barnett M.J."/>
            <person name="Becker A."/>
            <person name="Boistard P."/>
            <person name="Bothe G."/>
            <person name="Boutry M."/>
            <person name="Bowser L."/>
            <person name="Buhrmester J."/>
            <person name="Cadieu E."/>
            <person name="Capela D."/>
            <person name="Chain P."/>
            <person name="Cowie A."/>
            <person name="Davis R.W."/>
            <person name="Dreano S."/>
            <person name="Federspiel N.A."/>
            <person name="Fisher R.F."/>
            <person name="Gloux S."/>
            <person name="Godrie T."/>
            <person name="Goffeau A."/>
            <person name="Golding B."/>
            <person name="Gouzy J."/>
            <person name="Gurjal M."/>
            <person name="Hernandez-Lucas I."/>
            <person name="Hong A."/>
            <person name="Huizar L."/>
            <person name="Hyman R.W."/>
            <person name="Jones T."/>
            <person name="Kahn D."/>
            <person name="Kahn M.L."/>
            <person name="Kalman S."/>
            <person name="Keating D.H."/>
            <person name="Kiss E."/>
            <person name="Komp C."/>
            <person name="Lelaure V."/>
            <person name="Masuy D."/>
            <person name="Palm C."/>
            <person name="Peck M.C."/>
            <person name="Pohl T.M."/>
            <person name="Portetelle D."/>
            <person name="Purnelle B."/>
            <person name="Ramsperger U."/>
            <person name="Surzycki R."/>
            <person name="Thebault P."/>
            <person name="Vandenbol M."/>
            <person name="Vorhoelter F.J."/>
            <person name="Weidner S."/>
            <person name="Wells D.H."/>
            <person name="Wong K."/>
            <person name="Yeh K.-C."/>
            <person name="Batut J."/>
        </authorList>
    </citation>
    <scope>NUCLEOTIDE SEQUENCE [LARGE SCALE GENOMIC DNA]</scope>
    <source>
        <strain>1021</strain>
    </source>
</reference>
<name>GLSA_RHIME</name>
<keyword id="KW-0378">Hydrolase</keyword>
<keyword id="KW-1185">Reference proteome</keyword>
<proteinExistence type="inferred from homology"/>
<protein>
    <recommendedName>
        <fullName evidence="1">Glutaminase</fullName>
        <ecNumber evidence="1">3.5.1.2</ecNumber>
    </recommendedName>
</protein>
<feature type="chain" id="PRO_0000110621" description="Glutaminase">
    <location>
        <begin position="1"/>
        <end position="315"/>
    </location>
</feature>
<feature type="binding site" evidence="1">
    <location>
        <position position="70"/>
    </location>
    <ligand>
        <name>substrate</name>
    </ligand>
</feature>
<feature type="binding site" evidence="1">
    <location>
        <position position="120"/>
    </location>
    <ligand>
        <name>substrate</name>
    </ligand>
</feature>
<feature type="binding site" evidence="1">
    <location>
        <position position="166"/>
    </location>
    <ligand>
        <name>substrate</name>
    </ligand>
</feature>
<feature type="binding site" evidence="1">
    <location>
        <position position="173"/>
    </location>
    <ligand>
        <name>substrate</name>
    </ligand>
</feature>
<feature type="binding site" evidence="1">
    <location>
        <position position="197"/>
    </location>
    <ligand>
        <name>substrate</name>
    </ligand>
</feature>
<feature type="binding site" evidence="1">
    <location>
        <position position="249"/>
    </location>
    <ligand>
        <name>substrate</name>
    </ligand>
</feature>
<feature type="binding site" evidence="1">
    <location>
        <position position="267"/>
    </location>
    <ligand>
        <name>substrate</name>
    </ligand>
</feature>
<sequence length="315" mass="33991">MREPKPQEDLQAIIDDIYRELTPRLGEGKVADYIPQLARVDARHFGMAIVTTGGEVYRVGDAEMPFSIQSISKVFTLTLALGKHGENIWNRVGREPSGSAFNSIVQLEHEGGKPRNPFINAGAIRISDLILAGHTPKELIGEIVRFVRYLADDENIVIDHEVARSETATGYRNIALANFMRSFGRLDHPVEHVLGVYFHHCALAMTCSQLAKAGLFLAAGGTNPLTGHSVVSRQRARRINALMLTCGHYDGSGDFAYRVGLPGKSGVGGGIMAVAPGKASIAVWSPGLNDYGNSLLGSLALEMLAARTGWSVFGP</sequence>
<organism>
    <name type="scientific">Rhizobium meliloti (strain 1021)</name>
    <name type="common">Ensifer meliloti</name>
    <name type="synonym">Sinorhizobium meliloti</name>
    <dbReference type="NCBI Taxonomy" id="266834"/>
    <lineage>
        <taxon>Bacteria</taxon>
        <taxon>Pseudomonadati</taxon>
        <taxon>Pseudomonadota</taxon>
        <taxon>Alphaproteobacteria</taxon>
        <taxon>Hyphomicrobiales</taxon>
        <taxon>Rhizobiaceae</taxon>
        <taxon>Sinorhizobium/Ensifer group</taxon>
        <taxon>Sinorhizobium</taxon>
    </lineage>
</organism>
<comment type="catalytic activity">
    <reaction evidence="1">
        <text>L-glutamine + H2O = L-glutamate + NH4(+)</text>
        <dbReference type="Rhea" id="RHEA:15889"/>
        <dbReference type="ChEBI" id="CHEBI:15377"/>
        <dbReference type="ChEBI" id="CHEBI:28938"/>
        <dbReference type="ChEBI" id="CHEBI:29985"/>
        <dbReference type="ChEBI" id="CHEBI:58359"/>
        <dbReference type="EC" id="3.5.1.2"/>
    </reaction>
</comment>
<comment type="subunit">
    <text evidence="1">Homotetramer.</text>
</comment>
<comment type="similarity">
    <text evidence="1">Belongs to the glutaminase family.</text>
</comment>
<gene>
    <name evidence="1" type="primary">glsA</name>
    <name type="ordered locus">R01786</name>
    <name type="ORF">SMc00486</name>
</gene>